<evidence type="ECO:0000255" key="1">
    <source>
        <dbReference type="HAMAP-Rule" id="MF_01246"/>
    </source>
</evidence>
<evidence type="ECO:0000305" key="2"/>
<keyword id="KW-0119">Carbohydrate metabolism</keyword>
<keyword id="KW-0378">Hydrolase</keyword>
<keyword id="KW-0460">Magnesium</keyword>
<keyword id="KW-0479">Metal-binding</keyword>
<accession>Q8DCD5</accession>
<proteinExistence type="inferred from homology"/>
<gene>
    <name type="ordered locus">VV1_1486</name>
</gene>
<feature type="chain" id="PRO_0000051605" description="Carbohydrate deacetylase">
    <location>
        <begin position="1"/>
        <end position="252"/>
    </location>
</feature>
<feature type="binding site" evidence="1">
    <location>
        <position position="59"/>
    </location>
    <ligand>
        <name>Mg(2+)</name>
        <dbReference type="ChEBI" id="CHEBI:18420"/>
    </ligand>
</feature>
<feature type="binding site" evidence="1">
    <location>
        <position position="122"/>
    </location>
    <ligand>
        <name>Mg(2+)</name>
        <dbReference type="ChEBI" id="CHEBI:18420"/>
    </ligand>
</feature>
<name>YDJC_VIBVU</name>
<protein>
    <recommendedName>
        <fullName evidence="1">Carbohydrate deacetylase</fullName>
        <ecNumber evidence="1">3.5.1.-</ecNumber>
    </recommendedName>
</protein>
<dbReference type="EC" id="3.5.1.-" evidence="1"/>
<dbReference type="EMBL" id="AE016795">
    <property type="protein sequence ID" value="AAO09925.1"/>
    <property type="status" value="ALT_INIT"/>
    <property type="molecule type" value="Genomic_DNA"/>
</dbReference>
<dbReference type="SMR" id="Q8DCD5"/>
<dbReference type="KEGG" id="vvu:VV1_1486"/>
<dbReference type="HOGENOM" id="CLU_064244_4_0_6"/>
<dbReference type="Proteomes" id="UP000002275">
    <property type="component" value="Chromosome 1"/>
</dbReference>
<dbReference type="GO" id="GO:0019213">
    <property type="term" value="F:deacetylase activity"/>
    <property type="evidence" value="ECO:0007669"/>
    <property type="project" value="TreeGrafter"/>
</dbReference>
<dbReference type="GO" id="GO:0016811">
    <property type="term" value="F:hydrolase activity, acting on carbon-nitrogen (but not peptide) bonds, in linear amides"/>
    <property type="evidence" value="ECO:0007669"/>
    <property type="project" value="UniProtKB-UniRule"/>
</dbReference>
<dbReference type="GO" id="GO:0046872">
    <property type="term" value="F:metal ion binding"/>
    <property type="evidence" value="ECO:0007669"/>
    <property type="project" value="UniProtKB-KW"/>
</dbReference>
<dbReference type="GO" id="GO:0000272">
    <property type="term" value="P:polysaccharide catabolic process"/>
    <property type="evidence" value="ECO:0007669"/>
    <property type="project" value="InterPro"/>
</dbReference>
<dbReference type="CDD" id="cd10803">
    <property type="entry name" value="YdjC_EF3048_like"/>
    <property type="match status" value="1"/>
</dbReference>
<dbReference type="Gene3D" id="3.20.20.370">
    <property type="entry name" value="Glycoside hydrolase/deacetylase"/>
    <property type="match status" value="1"/>
</dbReference>
<dbReference type="HAMAP" id="MF_01246">
    <property type="entry name" value="COD"/>
    <property type="match status" value="1"/>
</dbReference>
<dbReference type="InterPro" id="IPR022948">
    <property type="entry name" value="COD_ChbG_bac"/>
</dbReference>
<dbReference type="InterPro" id="IPR011330">
    <property type="entry name" value="Glyco_hydro/deAcase_b/a-brl"/>
</dbReference>
<dbReference type="InterPro" id="IPR006879">
    <property type="entry name" value="YdjC-like"/>
</dbReference>
<dbReference type="NCBIfam" id="NF002559">
    <property type="entry name" value="PRK02134.1"/>
    <property type="match status" value="1"/>
</dbReference>
<dbReference type="PANTHER" id="PTHR31609:SF1">
    <property type="entry name" value="CARBOHYDRATE DEACETYLASE"/>
    <property type="match status" value="1"/>
</dbReference>
<dbReference type="PANTHER" id="PTHR31609">
    <property type="entry name" value="YDJC DEACETYLASE FAMILY MEMBER"/>
    <property type="match status" value="1"/>
</dbReference>
<dbReference type="Pfam" id="PF04794">
    <property type="entry name" value="YdjC"/>
    <property type="match status" value="1"/>
</dbReference>
<dbReference type="SUPFAM" id="SSF88713">
    <property type="entry name" value="Glycoside hydrolase/deacetylase"/>
    <property type="match status" value="1"/>
</dbReference>
<reference key="1">
    <citation type="submission" date="2002-12" db="EMBL/GenBank/DDBJ databases">
        <title>Complete genome sequence of Vibrio vulnificus CMCP6.</title>
        <authorList>
            <person name="Rhee J.H."/>
            <person name="Kim S.Y."/>
            <person name="Chung S.S."/>
            <person name="Kim J.J."/>
            <person name="Moon Y.H."/>
            <person name="Jeong H."/>
            <person name="Choy H.E."/>
        </authorList>
    </citation>
    <scope>NUCLEOTIDE SEQUENCE [LARGE SCALE GENOMIC DNA]</scope>
    <source>
        <strain>CMCP6</strain>
    </source>
</reference>
<sequence>MKVIFNADDFGLTRGVNDGIVHAHLDGVVRSTTMMVGMPAEAHAVELANHLPELKVGLHLRFTAGRPLTEEQNLVGRDGDFTPYGQFWHRRDYDPIAIHNEAVAQVEYFLALGLNLSHIDSHHHAHTHPQFEPVIYDIARTYQVPLRSTGLAGEEEFGCRYHFTDHFYDKRVGHDSLIQHLLTLKEHYDVVEVMCHPAIVDTALEACSGYAKQRELELAILTSDELKLSLRKHDIEVTDYSELIFAPLHSCV</sequence>
<comment type="function">
    <text evidence="1">Probably catalyzes the deacetylation of acetylated carbohydrates an important step in the degradation of oligosaccharides.</text>
</comment>
<comment type="cofactor">
    <cofactor evidence="1">
        <name>Mg(2+)</name>
        <dbReference type="ChEBI" id="CHEBI:18420"/>
    </cofactor>
</comment>
<comment type="subunit">
    <text evidence="1">Homodimer.</text>
</comment>
<comment type="similarity">
    <text evidence="1">Belongs to the YdjC deacetylase family.</text>
</comment>
<comment type="sequence caution" evidence="2">
    <conflict type="erroneous initiation">
        <sequence resource="EMBL-CDS" id="AAO09925"/>
    </conflict>
    <text>Extended N-terminus.</text>
</comment>
<organism>
    <name type="scientific">Vibrio vulnificus (strain CMCP6)</name>
    <dbReference type="NCBI Taxonomy" id="216895"/>
    <lineage>
        <taxon>Bacteria</taxon>
        <taxon>Pseudomonadati</taxon>
        <taxon>Pseudomonadota</taxon>
        <taxon>Gammaproteobacteria</taxon>
        <taxon>Vibrionales</taxon>
        <taxon>Vibrionaceae</taxon>
        <taxon>Vibrio</taxon>
    </lineage>
</organism>